<accession>A3CNS2</accession>
<reference key="1">
    <citation type="journal article" date="2007" name="J. Bacteriol.">
        <title>Genome of the opportunistic pathogen Streptococcus sanguinis.</title>
        <authorList>
            <person name="Xu P."/>
            <person name="Alves J.M."/>
            <person name="Kitten T."/>
            <person name="Brown A."/>
            <person name="Chen Z."/>
            <person name="Ozaki L.S."/>
            <person name="Manque P."/>
            <person name="Ge X."/>
            <person name="Serrano M.G."/>
            <person name="Puiu D."/>
            <person name="Hendricks S."/>
            <person name="Wang Y."/>
            <person name="Chaplin M.D."/>
            <person name="Akan D."/>
            <person name="Paik S."/>
            <person name="Peterson D.L."/>
            <person name="Macrina F.L."/>
            <person name="Buck G.A."/>
        </authorList>
    </citation>
    <scope>NUCLEOTIDE SEQUENCE [LARGE SCALE GENOMIC DNA]</scope>
    <source>
        <strain>SK36</strain>
    </source>
</reference>
<dbReference type="EC" id="2.5.1.75" evidence="1"/>
<dbReference type="EMBL" id="CP000387">
    <property type="protein sequence ID" value="ABN44827.1"/>
    <property type="molecule type" value="Genomic_DNA"/>
</dbReference>
<dbReference type="RefSeq" id="WP_011837132.1">
    <property type="nucleotide sequence ID" value="NC_009009.1"/>
</dbReference>
<dbReference type="RefSeq" id="YP_001035377.1">
    <property type="nucleotide sequence ID" value="NC_009009.1"/>
</dbReference>
<dbReference type="SMR" id="A3CNS2"/>
<dbReference type="STRING" id="388919.SSA_1433"/>
<dbReference type="KEGG" id="ssa:SSA_1433"/>
<dbReference type="PATRIC" id="fig|388919.9.peg.1359"/>
<dbReference type="eggNOG" id="COG0324">
    <property type="taxonomic scope" value="Bacteria"/>
</dbReference>
<dbReference type="HOGENOM" id="CLU_032616_0_1_9"/>
<dbReference type="OrthoDB" id="9776390at2"/>
<dbReference type="Proteomes" id="UP000002148">
    <property type="component" value="Chromosome"/>
</dbReference>
<dbReference type="GO" id="GO:0005524">
    <property type="term" value="F:ATP binding"/>
    <property type="evidence" value="ECO:0007669"/>
    <property type="project" value="UniProtKB-UniRule"/>
</dbReference>
<dbReference type="GO" id="GO:0052381">
    <property type="term" value="F:tRNA dimethylallyltransferase activity"/>
    <property type="evidence" value="ECO:0007669"/>
    <property type="project" value="UniProtKB-UniRule"/>
</dbReference>
<dbReference type="GO" id="GO:0006400">
    <property type="term" value="P:tRNA modification"/>
    <property type="evidence" value="ECO:0007669"/>
    <property type="project" value="TreeGrafter"/>
</dbReference>
<dbReference type="Gene3D" id="3.40.50.300">
    <property type="entry name" value="P-loop containing nucleotide triphosphate hydrolases"/>
    <property type="match status" value="1"/>
</dbReference>
<dbReference type="HAMAP" id="MF_00185">
    <property type="entry name" value="IPP_trans"/>
    <property type="match status" value="1"/>
</dbReference>
<dbReference type="InterPro" id="IPR039657">
    <property type="entry name" value="Dimethylallyltransferase"/>
</dbReference>
<dbReference type="InterPro" id="IPR018022">
    <property type="entry name" value="IPT"/>
</dbReference>
<dbReference type="InterPro" id="IPR027417">
    <property type="entry name" value="P-loop_NTPase"/>
</dbReference>
<dbReference type="NCBIfam" id="TIGR00174">
    <property type="entry name" value="miaA"/>
    <property type="match status" value="1"/>
</dbReference>
<dbReference type="PANTHER" id="PTHR11088">
    <property type="entry name" value="TRNA DIMETHYLALLYLTRANSFERASE"/>
    <property type="match status" value="1"/>
</dbReference>
<dbReference type="PANTHER" id="PTHR11088:SF60">
    <property type="entry name" value="TRNA DIMETHYLALLYLTRANSFERASE"/>
    <property type="match status" value="1"/>
</dbReference>
<dbReference type="Pfam" id="PF01715">
    <property type="entry name" value="IPPT"/>
    <property type="match status" value="1"/>
</dbReference>
<dbReference type="SUPFAM" id="SSF52540">
    <property type="entry name" value="P-loop containing nucleoside triphosphate hydrolases"/>
    <property type="match status" value="2"/>
</dbReference>
<comment type="function">
    <text evidence="1">Catalyzes the transfer of a dimethylallyl group onto the adenine at position 37 in tRNAs that read codons beginning with uridine, leading to the formation of N6-(dimethylallyl)adenosine (i(6)A).</text>
</comment>
<comment type="catalytic activity">
    <reaction evidence="1">
        <text>adenosine(37) in tRNA + dimethylallyl diphosphate = N(6)-dimethylallyladenosine(37) in tRNA + diphosphate</text>
        <dbReference type="Rhea" id="RHEA:26482"/>
        <dbReference type="Rhea" id="RHEA-COMP:10162"/>
        <dbReference type="Rhea" id="RHEA-COMP:10375"/>
        <dbReference type="ChEBI" id="CHEBI:33019"/>
        <dbReference type="ChEBI" id="CHEBI:57623"/>
        <dbReference type="ChEBI" id="CHEBI:74411"/>
        <dbReference type="ChEBI" id="CHEBI:74415"/>
        <dbReference type="EC" id="2.5.1.75"/>
    </reaction>
</comment>
<comment type="cofactor">
    <cofactor evidence="1">
        <name>Mg(2+)</name>
        <dbReference type="ChEBI" id="CHEBI:18420"/>
    </cofactor>
</comment>
<comment type="subunit">
    <text evidence="1">Monomer.</text>
</comment>
<comment type="similarity">
    <text evidence="1">Belongs to the IPP transferase family.</text>
</comment>
<keyword id="KW-0067">ATP-binding</keyword>
<keyword id="KW-0460">Magnesium</keyword>
<keyword id="KW-0547">Nucleotide-binding</keyword>
<keyword id="KW-1185">Reference proteome</keyword>
<keyword id="KW-0808">Transferase</keyword>
<keyword id="KW-0819">tRNA processing</keyword>
<organism>
    <name type="scientific">Streptococcus sanguinis (strain SK36)</name>
    <dbReference type="NCBI Taxonomy" id="388919"/>
    <lineage>
        <taxon>Bacteria</taxon>
        <taxon>Bacillati</taxon>
        <taxon>Bacillota</taxon>
        <taxon>Bacilli</taxon>
        <taxon>Lactobacillales</taxon>
        <taxon>Streptococcaceae</taxon>
        <taxon>Streptococcus</taxon>
    </lineage>
</organism>
<name>MIAA_STRSV</name>
<sequence>MKTKIIVIVGPTAVGKTALSIEVAKRFNGQIISGDSQQVYRGLDIGTAKIRPEEQEGIPHHLLDVREVGESYSAYDFVTEAAQAIREIAAQDQLPIICGGTGLYIQSLLEGYHLGGSVPHEEILAYRAQLDSWSDEDLFRKIAELGIEIPQLNRRRAMRALEIAHLGGSLENSQPDYEALLICLDDERERLYERINHRVDLMLEAGLLEEARWLYEQAPISQASKGIGYKELFPYFEGRMSLEEAVDTLKQNTRRFAKRQLTWFRNRMSVTFYQVGNPDYKNQVMEDIKNFLDK</sequence>
<feature type="chain" id="PRO_1000020675" description="tRNA dimethylallyltransferase">
    <location>
        <begin position="1"/>
        <end position="294"/>
    </location>
</feature>
<feature type="region of interest" description="Interaction with substrate tRNA" evidence="1">
    <location>
        <begin position="35"/>
        <end position="38"/>
    </location>
</feature>
<feature type="binding site" evidence="1">
    <location>
        <begin position="10"/>
        <end position="17"/>
    </location>
    <ligand>
        <name>ATP</name>
        <dbReference type="ChEBI" id="CHEBI:30616"/>
    </ligand>
</feature>
<feature type="binding site" evidence="1">
    <location>
        <begin position="12"/>
        <end position="17"/>
    </location>
    <ligand>
        <name>substrate</name>
    </ligand>
</feature>
<feature type="site" description="Interaction with substrate tRNA" evidence="1">
    <location>
        <position position="101"/>
    </location>
</feature>
<feature type="site" description="Interaction with substrate tRNA" evidence="1">
    <location>
        <position position="127"/>
    </location>
</feature>
<proteinExistence type="inferred from homology"/>
<evidence type="ECO:0000255" key="1">
    <source>
        <dbReference type="HAMAP-Rule" id="MF_00185"/>
    </source>
</evidence>
<gene>
    <name evidence="1" type="primary">miaA</name>
    <name type="ordered locus">SSA_1433</name>
</gene>
<protein>
    <recommendedName>
        <fullName evidence="1">tRNA dimethylallyltransferase</fullName>
        <ecNumber evidence="1">2.5.1.75</ecNumber>
    </recommendedName>
    <alternativeName>
        <fullName evidence="1">Dimethylallyl diphosphate:tRNA dimethylallyltransferase</fullName>
        <shortName evidence="1">DMAPP:tRNA dimethylallyltransferase</shortName>
        <shortName evidence="1">DMATase</shortName>
    </alternativeName>
    <alternativeName>
        <fullName evidence="1">Isopentenyl-diphosphate:tRNA isopentenyltransferase</fullName>
        <shortName evidence="1">IPP transferase</shortName>
        <shortName evidence="1">IPPT</shortName>
        <shortName evidence="1">IPTase</shortName>
    </alternativeName>
</protein>